<sequence>MEGDQETNVYTLVARKPSFDLPTACPNCLPAYIYLKLAQLPFELAFNSTFPDSDELPYFESDTYVAYNNEDGGVIEKLKKDGIVNLDSQLQSLSDYLSLKALIVSWLEEALTYEIWVGTEGISTSKIYYSDLPWVISKVLFYKQTYLAKNRLGITKENAEQREKQIYKRASEAYEALSTRLGEQKFLFEDRPSSLDAFLLSHILFIIQALPVTSVLRCKLLEHSNLVRYAEKLKSEFLEASSSSPSPPLHSFPSSFPRKSSKPKSKPKVEKTEEEKKFKKRARFFLAAQFLAVVIYVSVMGGGSSDELEYEDEDD</sequence>
<comment type="function">
    <text evidence="4">Involved in transport of proteins into the mitochondrion.</text>
</comment>
<comment type="subunit">
    <text evidence="4">Part of a high molecular weight complex that is distinct from the TOM complex. Interacts with a variety of mitochondrial precursor proteins.</text>
</comment>
<comment type="interaction">
    <interactant intactId="EBI-2123898">
        <id>O64471</id>
    </interactant>
    <interactant intactId="EBI-1392093">
        <id>Q5ICL9</id>
        <label>NPR4</label>
    </interactant>
    <organismsDiffer>false</organismsDiffer>
    <experiments>3</experiments>
</comment>
<comment type="interaction">
    <interactant intactId="EBI-2123898">
        <id>O64471</id>
    </interactant>
    <interactant intactId="EBI-2124038">
        <id>Q9LHE5</id>
        <label>TOM40-1</label>
    </interactant>
    <organismsDiffer>false</organismsDiffer>
    <experiments>2</experiments>
</comment>
<comment type="interaction">
    <interactant intactId="EBI-2123898">
        <id>O64471</id>
    </interactant>
    <interactant intactId="EBI-2362258">
        <id>O80413</id>
        <label>103627788</label>
    </interactant>
    <organismsDiffer>true</organismsDiffer>
    <experiments>2</experiments>
</comment>
<comment type="interaction">
    <interactant intactId="EBI-2123898">
        <id>O64471</id>
    </interactant>
    <interactant intactId="EBI-2123914">
        <id>Q07185</id>
        <label>AOX1</label>
    </interactant>
    <organismsDiffer>true</organismsDiffer>
    <experiments>3</experiments>
</comment>
<comment type="interaction">
    <interactant intactId="EBI-2123898">
        <id>O64471</id>
    </interactant>
    <interactant intactId="EBI-2124012">
        <id>Q7DM06</id>
    </interactant>
    <organismsDiffer>true</organismsDiffer>
    <experiments>2</experiments>
</comment>
<comment type="subcellular location">
    <subcellularLocation>
        <location evidence="5">Mitochondrion inner membrane</location>
        <topology evidence="5">Multi-pass membrane protein</topology>
    </subcellularLocation>
    <subcellularLocation>
        <location evidence="5">Mitochondrion outer membrane</location>
        <topology evidence="5">Multi-pass membrane protein</topology>
    </subcellularLocation>
    <text evidence="3 4">The inner membrane localization is based on mass spectrometry identification and may be the result of sample contamination.</text>
</comment>
<comment type="tissue specificity">
    <text evidence="3">Expressed in roots, young cotyledons, flowers and leaves.</text>
</comment>
<comment type="disruption phenotype">
    <text evidence="4">Decreased growth, abnormal leaf morphology and ectopic floral development and sterility. Higher starch accumulation in chloroplasts and reduced rates of mitochondrial protein import.</text>
</comment>
<comment type="similarity">
    <text evidence="5">Belongs to the metaxin family.</text>
</comment>
<name>MTX_ARATH</name>
<accession>O64471</accession>
<organism>
    <name type="scientific">Arabidopsis thaliana</name>
    <name type="common">Mouse-ear cress</name>
    <dbReference type="NCBI Taxonomy" id="3702"/>
    <lineage>
        <taxon>Eukaryota</taxon>
        <taxon>Viridiplantae</taxon>
        <taxon>Streptophyta</taxon>
        <taxon>Embryophyta</taxon>
        <taxon>Tracheophyta</taxon>
        <taxon>Spermatophyta</taxon>
        <taxon>Magnoliopsida</taxon>
        <taxon>eudicotyledons</taxon>
        <taxon>Gunneridae</taxon>
        <taxon>Pentapetalae</taxon>
        <taxon>rosids</taxon>
        <taxon>malvids</taxon>
        <taxon>Brassicales</taxon>
        <taxon>Brassicaceae</taxon>
        <taxon>Camelineae</taxon>
        <taxon>Arabidopsis</taxon>
    </lineage>
</organism>
<feature type="chain" id="PRO_0000420943" description="Mitochondrial outer membrane import complex protein METAXIN">
    <location>
        <begin position="1"/>
        <end position="315"/>
    </location>
</feature>
<feature type="transmembrane region" description="Helical" evidence="1">
    <location>
        <begin position="195"/>
        <end position="215"/>
    </location>
</feature>
<feature type="transmembrane region" description="Helical" evidence="1">
    <location>
        <begin position="284"/>
        <end position="304"/>
    </location>
</feature>
<feature type="region of interest" description="Disordered" evidence="2">
    <location>
        <begin position="240"/>
        <end position="277"/>
    </location>
</feature>
<feature type="coiled-coil region" evidence="1">
    <location>
        <begin position="157"/>
        <end position="181"/>
    </location>
</feature>
<feature type="compositionally biased region" description="Basic and acidic residues" evidence="2">
    <location>
        <begin position="267"/>
        <end position="277"/>
    </location>
</feature>
<feature type="modified residue" description="N-acetylmethionine" evidence="6">
    <location>
        <position position="1"/>
    </location>
</feature>
<gene>
    <name type="primary">MTX1</name>
    <name type="ordered locus">At2g19080</name>
    <name type="ORF">T20K24.9</name>
</gene>
<evidence type="ECO:0000255" key="1"/>
<evidence type="ECO:0000256" key="2">
    <source>
        <dbReference type="SAM" id="MobiDB-lite"/>
    </source>
</evidence>
<evidence type="ECO:0000269" key="3">
    <source>
    </source>
</evidence>
<evidence type="ECO:0000269" key="4">
    <source>
    </source>
</evidence>
<evidence type="ECO:0000305" key="5"/>
<evidence type="ECO:0007744" key="6">
    <source>
    </source>
</evidence>
<protein>
    <recommendedName>
        <fullName>Mitochondrial outer membrane import complex protein METAXIN</fullName>
    </recommendedName>
</protein>
<reference key="1">
    <citation type="journal article" date="1999" name="Nature">
        <title>Sequence and analysis of chromosome 2 of the plant Arabidopsis thaliana.</title>
        <authorList>
            <person name="Lin X."/>
            <person name="Kaul S."/>
            <person name="Rounsley S.D."/>
            <person name="Shea T.P."/>
            <person name="Benito M.-I."/>
            <person name="Town C.D."/>
            <person name="Fujii C.Y."/>
            <person name="Mason T.M."/>
            <person name="Bowman C.L."/>
            <person name="Barnstead M.E."/>
            <person name="Feldblyum T.V."/>
            <person name="Buell C.R."/>
            <person name="Ketchum K.A."/>
            <person name="Lee J.J."/>
            <person name="Ronning C.M."/>
            <person name="Koo H.L."/>
            <person name="Moffat K.S."/>
            <person name="Cronin L.A."/>
            <person name="Shen M."/>
            <person name="Pai G."/>
            <person name="Van Aken S."/>
            <person name="Umayam L."/>
            <person name="Tallon L.J."/>
            <person name="Gill J.E."/>
            <person name="Adams M.D."/>
            <person name="Carrera A.J."/>
            <person name="Creasy T.H."/>
            <person name="Goodman H.M."/>
            <person name="Somerville C.R."/>
            <person name="Copenhaver G.P."/>
            <person name="Preuss D."/>
            <person name="Nierman W.C."/>
            <person name="White O."/>
            <person name="Eisen J.A."/>
            <person name="Salzberg S.L."/>
            <person name="Fraser C.M."/>
            <person name="Venter J.C."/>
        </authorList>
    </citation>
    <scope>NUCLEOTIDE SEQUENCE [LARGE SCALE GENOMIC DNA]</scope>
    <source>
        <strain>cv. Columbia</strain>
    </source>
</reference>
<reference key="2">
    <citation type="journal article" date="2017" name="Plant J.">
        <title>Araport11: a complete reannotation of the Arabidopsis thaliana reference genome.</title>
        <authorList>
            <person name="Cheng C.Y."/>
            <person name="Krishnakumar V."/>
            <person name="Chan A.P."/>
            <person name="Thibaud-Nissen F."/>
            <person name="Schobel S."/>
            <person name="Town C.D."/>
        </authorList>
    </citation>
    <scope>GENOME REANNOTATION</scope>
    <source>
        <strain>cv. Columbia</strain>
    </source>
</reference>
<reference key="3">
    <citation type="journal article" date="2003" name="Science">
        <title>Empirical analysis of transcriptional activity in the Arabidopsis genome.</title>
        <authorList>
            <person name="Yamada K."/>
            <person name="Lim J."/>
            <person name="Dale J.M."/>
            <person name="Chen H."/>
            <person name="Shinn P."/>
            <person name="Palm C.J."/>
            <person name="Southwick A.M."/>
            <person name="Wu H.C."/>
            <person name="Kim C.J."/>
            <person name="Nguyen M."/>
            <person name="Pham P.K."/>
            <person name="Cheuk R.F."/>
            <person name="Karlin-Newmann G."/>
            <person name="Liu S.X."/>
            <person name="Lam B."/>
            <person name="Sakano H."/>
            <person name="Wu T."/>
            <person name="Yu G."/>
            <person name="Miranda M."/>
            <person name="Quach H.L."/>
            <person name="Tripp M."/>
            <person name="Chang C.H."/>
            <person name="Lee J.M."/>
            <person name="Toriumi M.J."/>
            <person name="Chan M.M."/>
            <person name="Tang C.C."/>
            <person name="Onodera C.S."/>
            <person name="Deng J.M."/>
            <person name="Akiyama K."/>
            <person name="Ansari Y."/>
            <person name="Arakawa T."/>
            <person name="Banh J."/>
            <person name="Banno F."/>
            <person name="Bowser L."/>
            <person name="Brooks S.Y."/>
            <person name="Carninci P."/>
            <person name="Chao Q."/>
            <person name="Choy N."/>
            <person name="Enju A."/>
            <person name="Goldsmith A.D."/>
            <person name="Gurjal M."/>
            <person name="Hansen N.F."/>
            <person name="Hayashizaki Y."/>
            <person name="Johnson-Hopson C."/>
            <person name="Hsuan V.W."/>
            <person name="Iida K."/>
            <person name="Karnes M."/>
            <person name="Khan S."/>
            <person name="Koesema E."/>
            <person name="Ishida J."/>
            <person name="Jiang P.X."/>
            <person name="Jones T."/>
            <person name="Kawai J."/>
            <person name="Kamiya A."/>
            <person name="Meyers C."/>
            <person name="Nakajima M."/>
            <person name="Narusaka M."/>
            <person name="Seki M."/>
            <person name="Sakurai T."/>
            <person name="Satou M."/>
            <person name="Tamse R."/>
            <person name="Vaysberg M."/>
            <person name="Wallender E.K."/>
            <person name="Wong C."/>
            <person name="Yamamura Y."/>
            <person name="Yuan S."/>
            <person name="Shinozaki K."/>
            <person name="Davis R.W."/>
            <person name="Theologis A."/>
            <person name="Ecker J.R."/>
        </authorList>
    </citation>
    <scope>NUCLEOTIDE SEQUENCE [LARGE SCALE MRNA]</scope>
    <source>
        <strain>cv. Columbia</strain>
    </source>
</reference>
<reference key="4">
    <citation type="submission" date="2002-03" db="EMBL/GenBank/DDBJ databases">
        <title>Full-length cDNA from Arabidopsis thaliana.</title>
        <authorList>
            <person name="Brover V.V."/>
            <person name="Troukhan M.E."/>
            <person name="Alexandrov N.A."/>
            <person name="Lu Y.-P."/>
            <person name="Flavell R.B."/>
            <person name="Feldmann K.A."/>
        </authorList>
    </citation>
    <scope>NUCLEOTIDE SEQUENCE [LARGE SCALE MRNA]</scope>
</reference>
<reference key="5">
    <citation type="journal article" date="2004" name="Plant Physiol.">
        <title>A transcriptomic and proteomic characterization of the Arabidopsis mitochondrial protein import apparatus and its response to mitochondrial dysfunction.</title>
        <authorList>
            <person name="Lister R."/>
            <person name="Chew O."/>
            <person name="Lee M.N."/>
            <person name="Heazlewood J.L."/>
            <person name="Clifton R."/>
            <person name="Parker K.L."/>
            <person name="Millar A.H."/>
            <person name="Whelan J."/>
        </authorList>
    </citation>
    <scope>TISSUE SPECIFICITY</scope>
    <scope>SUBCELLULAR LOCATION</scope>
    <scope>IDENTIFICATION BY MASS SPECTROMETRY</scope>
</reference>
<reference key="6">
    <citation type="journal article" date="2007" name="Plant Cell">
        <title>Functional definition of outer membrane proteins involved in preprotein import into mitochondria.</title>
        <authorList>
            <person name="Lister R."/>
            <person name="Carrie C."/>
            <person name="Duncan O."/>
            <person name="Ho L.H."/>
            <person name="Howell K.A."/>
            <person name="Murcha M.W."/>
            <person name="Whelan J."/>
        </authorList>
    </citation>
    <scope>FUNCTION</scope>
    <scope>SUBCELLULAR LOCATION</scope>
    <scope>DISRUPTION PHENOTYPE</scope>
    <scope>SUBUNIT</scope>
    <scope>INTERACTION WITH MITOCHONDRIAL PRECURSOR PROTEINS</scope>
</reference>
<reference key="7">
    <citation type="journal article" date="2012" name="Mol. Cell. Proteomics">
        <title>Comparative large-scale characterisation of plant vs. mammal proteins reveals similar and idiosyncratic N-alpha acetylation features.</title>
        <authorList>
            <person name="Bienvenut W.V."/>
            <person name="Sumpton D."/>
            <person name="Martinez A."/>
            <person name="Lilla S."/>
            <person name="Espagne C."/>
            <person name="Meinnel T."/>
            <person name="Giglione C."/>
        </authorList>
    </citation>
    <scope>ACETYLATION [LARGE SCALE ANALYSIS] AT MET-1</scope>
    <scope>IDENTIFICATION BY MASS SPECTROMETRY [LARGE SCALE ANALYSIS]</scope>
</reference>
<keyword id="KW-0007">Acetylation</keyword>
<keyword id="KW-0175">Coiled coil</keyword>
<keyword id="KW-0472">Membrane</keyword>
<keyword id="KW-0496">Mitochondrion</keyword>
<keyword id="KW-0999">Mitochondrion inner membrane</keyword>
<keyword id="KW-1000">Mitochondrion outer membrane</keyword>
<keyword id="KW-1185">Reference proteome</keyword>
<keyword id="KW-0812">Transmembrane</keyword>
<keyword id="KW-1133">Transmembrane helix</keyword>
<dbReference type="EMBL" id="AC002392">
    <property type="protein sequence ID" value="AAD12026.1"/>
    <property type="molecule type" value="Genomic_DNA"/>
</dbReference>
<dbReference type="EMBL" id="CP002685">
    <property type="protein sequence ID" value="AEC06846.1"/>
    <property type="molecule type" value="Genomic_DNA"/>
</dbReference>
<dbReference type="EMBL" id="AY070737">
    <property type="protein sequence ID" value="AAL50078.1"/>
    <property type="molecule type" value="mRNA"/>
</dbReference>
<dbReference type="EMBL" id="AY087648">
    <property type="protein sequence ID" value="AAM65186.1"/>
    <property type="molecule type" value="mRNA"/>
</dbReference>
<dbReference type="EMBL" id="AY142046">
    <property type="protein sequence ID" value="AAM98310.1"/>
    <property type="molecule type" value="mRNA"/>
</dbReference>
<dbReference type="PIR" id="T00528">
    <property type="entry name" value="T00528"/>
</dbReference>
<dbReference type="RefSeq" id="NP_565446.1">
    <property type="nucleotide sequence ID" value="NM_127465.4"/>
</dbReference>
<dbReference type="BioGRID" id="1782">
    <property type="interactions" value="9"/>
</dbReference>
<dbReference type="FunCoup" id="O64471">
    <property type="interactions" value="3550"/>
</dbReference>
<dbReference type="IntAct" id="O64471">
    <property type="interactions" value="8"/>
</dbReference>
<dbReference type="STRING" id="3702.O64471"/>
<dbReference type="iPTMnet" id="O64471"/>
<dbReference type="PaxDb" id="3702-AT2G19080.1"/>
<dbReference type="ProteomicsDB" id="238463"/>
<dbReference type="EnsemblPlants" id="AT2G19080.1">
    <property type="protein sequence ID" value="AT2G19080.1"/>
    <property type="gene ID" value="AT2G19080"/>
</dbReference>
<dbReference type="GeneID" id="816425"/>
<dbReference type="Gramene" id="AT2G19080.1">
    <property type="protein sequence ID" value="AT2G19080.1"/>
    <property type="gene ID" value="AT2G19080"/>
</dbReference>
<dbReference type="KEGG" id="ath:AT2G19080"/>
<dbReference type="Araport" id="AT2G19080"/>
<dbReference type="TAIR" id="AT2G19080"/>
<dbReference type="eggNOG" id="KOG3028">
    <property type="taxonomic scope" value="Eukaryota"/>
</dbReference>
<dbReference type="HOGENOM" id="CLU_071432_0_0_1"/>
<dbReference type="InParanoid" id="O64471"/>
<dbReference type="OMA" id="YFQTRCL"/>
<dbReference type="OrthoDB" id="5835136at2759"/>
<dbReference type="PhylomeDB" id="O64471"/>
<dbReference type="PRO" id="PR:O64471"/>
<dbReference type="Proteomes" id="UP000006548">
    <property type="component" value="Chromosome 2"/>
</dbReference>
<dbReference type="ExpressionAtlas" id="O64471">
    <property type="expression patterns" value="baseline and differential"/>
</dbReference>
<dbReference type="GO" id="GO:0005743">
    <property type="term" value="C:mitochondrial inner membrane"/>
    <property type="evidence" value="ECO:0007005"/>
    <property type="project" value="TAIR"/>
</dbReference>
<dbReference type="GO" id="GO:0005741">
    <property type="term" value="C:mitochondrial outer membrane"/>
    <property type="evidence" value="ECO:0000314"/>
    <property type="project" value="TAIR"/>
</dbReference>
<dbReference type="GO" id="GO:0005739">
    <property type="term" value="C:mitochondrion"/>
    <property type="evidence" value="ECO:0007005"/>
    <property type="project" value="TAIR"/>
</dbReference>
<dbReference type="GO" id="GO:0001401">
    <property type="term" value="C:SAM complex"/>
    <property type="evidence" value="ECO:0007669"/>
    <property type="project" value="InterPro"/>
</dbReference>
<dbReference type="GO" id="GO:0007005">
    <property type="term" value="P:mitochondrion organization"/>
    <property type="evidence" value="ECO:0007669"/>
    <property type="project" value="InterPro"/>
</dbReference>
<dbReference type="GO" id="GO:0006626">
    <property type="term" value="P:protein targeting to mitochondrion"/>
    <property type="evidence" value="ECO:0000315"/>
    <property type="project" value="TAIR"/>
</dbReference>
<dbReference type="CDD" id="cd03193">
    <property type="entry name" value="GST_C_Metaxin"/>
    <property type="match status" value="1"/>
</dbReference>
<dbReference type="InterPro" id="IPR036282">
    <property type="entry name" value="Glutathione-S-Trfase_C_sf"/>
</dbReference>
<dbReference type="InterPro" id="IPR017410">
    <property type="entry name" value="Metaxin1/3"/>
</dbReference>
<dbReference type="InterPro" id="IPR033468">
    <property type="entry name" value="Metaxin_GST"/>
</dbReference>
<dbReference type="InterPro" id="IPR050931">
    <property type="entry name" value="Mito_Protein_Transport_Metaxin"/>
</dbReference>
<dbReference type="InterPro" id="IPR012336">
    <property type="entry name" value="Thioredoxin-like_fold"/>
</dbReference>
<dbReference type="PANTHER" id="PTHR12289:SF41">
    <property type="entry name" value="FAILED AXON CONNECTIONS-RELATED"/>
    <property type="match status" value="1"/>
</dbReference>
<dbReference type="PANTHER" id="PTHR12289">
    <property type="entry name" value="METAXIN RELATED"/>
    <property type="match status" value="1"/>
</dbReference>
<dbReference type="Pfam" id="PF17171">
    <property type="entry name" value="GST_C_6"/>
    <property type="match status" value="1"/>
</dbReference>
<dbReference type="Pfam" id="PF17172">
    <property type="entry name" value="GST_N_4"/>
    <property type="match status" value="1"/>
</dbReference>
<dbReference type="PIRSF" id="PIRSF038150">
    <property type="entry name" value="Metaxin"/>
    <property type="match status" value="1"/>
</dbReference>
<dbReference type="SUPFAM" id="SSF47616">
    <property type="entry name" value="GST C-terminal domain-like"/>
    <property type="match status" value="1"/>
</dbReference>
<proteinExistence type="evidence at protein level"/>